<accession>B5DEL1</accession>
<evidence type="ECO:0000250" key="1">
    <source>
        <dbReference type="UniProtKB" id="Q8VC57"/>
    </source>
</evidence>
<evidence type="ECO:0000250" key="2">
    <source>
        <dbReference type="UniProtKB" id="Q9NXV2"/>
    </source>
</evidence>
<evidence type="ECO:0000256" key="3">
    <source>
        <dbReference type="SAM" id="MobiDB-lite"/>
    </source>
</evidence>
<dbReference type="EMBL" id="CH473948">
    <property type="protein sequence ID" value="EDM03804.1"/>
    <property type="molecule type" value="Genomic_DNA"/>
</dbReference>
<dbReference type="EMBL" id="BC168712">
    <property type="protein sequence ID" value="AAI68712.1"/>
    <property type="molecule type" value="mRNA"/>
</dbReference>
<dbReference type="RefSeq" id="NP_001099238.1">
    <property type="nucleotide sequence ID" value="NM_001105768.1"/>
</dbReference>
<dbReference type="SMR" id="B5DEL1"/>
<dbReference type="FunCoup" id="B5DEL1">
    <property type="interactions" value="2812"/>
</dbReference>
<dbReference type="STRING" id="10116.ENSRNOP00000073503"/>
<dbReference type="PhosphoSitePlus" id="B5DEL1"/>
<dbReference type="jPOST" id="B5DEL1"/>
<dbReference type="PaxDb" id="10116-ENSRNOP00000007850"/>
<dbReference type="PeptideAtlas" id="B5DEL1"/>
<dbReference type="Ensembl" id="ENSRNOT00000084991.2">
    <property type="protein sequence ID" value="ENSRNOP00000073503.1"/>
    <property type="gene ID" value="ENSRNOG00000057186.2"/>
</dbReference>
<dbReference type="GeneID" id="287109"/>
<dbReference type="KEGG" id="rno:287109"/>
<dbReference type="UCSC" id="RGD:1304990">
    <property type="organism name" value="rat"/>
</dbReference>
<dbReference type="AGR" id="RGD:1304990"/>
<dbReference type="CTD" id="54442"/>
<dbReference type="RGD" id="1304990">
    <property type="gene designation" value="Kctd5"/>
</dbReference>
<dbReference type="eggNOG" id="KOG2715">
    <property type="taxonomic scope" value="Eukaryota"/>
</dbReference>
<dbReference type="GeneTree" id="ENSGT00940000160374"/>
<dbReference type="HOGENOM" id="CLU_070830_1_0_1"/>
<dbReference type="InParanoid" id="B5DEL1"/>
<dbReference type="OrthoDB" id="29131at9989"/>
<dbReference type="PhylomeDB" id="B5DEL1"/>
<dbReference type="TreeFam" id="TF313754"/>
<dbReference type="PRO" id="PR:B5DEL1"/>
<dbReference type="Proteomes" id="UP000002494">
    <property type="component" value="Chromosome 10"/>
</dbReference>
<dbReference type="Proteomes" id="UP000234681">
    <property type="component" value="Chromosome 10"/>
</dbReference>
<dbReference type="Bgee" id="ENSRNOG00000057186">
    <property type="expression patterns" value="Expressed in jejunum and 18 other cell types or tissues"/>
</dbReference>
<dbReference type="GO" id="GO:0031463">
    <property type="term" value="C:Cul3-RING ubiquitin ligase complex"/>
    <property type="evidence" value="ECO:0000318"/>
    <property type="project" value="GO_Central"/>
</dbReference>
<dbReference type="GO" id="GO:0005737">
    <property type="term" value="C:cytoplasm"/>
    <property type="evidence" value="ECO:0000318"/>
    <property type="project" value="GO_Central"/>
</dbReference>
<dbReference type="GO" id="GO:0005829">
    <property type="term" value="C:cytosol"/>
    <property type="evidence" value="ECO:0000250"/>
    <property type="project" value="UniProtKB"/>
</dbReference>
<dbReference type="GO" id="GO:0005634">
    <property type="term" value="C:nucleus"/>
    <property type="evidence" value="ECO:0007669"/>
    <property type="project" value="UniProtKB-SubCell"/>
</dbReference>
<dbReference type="GO" id="GO:0097602">
    <property type="term" value="F:cullin family protein binding"/>
    <property type="evidence" value="ECO:0000318"/>
    <property type="project" value="GO_Central"/>
</dbReference>
<dbReference type="GO" id="GO:0042802">
    <property type="term" value="F:identical protein binding"/>
    <property type="evidence" value="ECO:0000266"/>
    <property type="project" value="RGD"/>
</dbReference>
<dbReference type="GO" id="GO:0044877">
    <property type="term" value="F:protein-containing complex binding"/>
    <property type="evidence" value="ECO:0000266"/>
    <property type="project" value="RGD"/>
</dbReference>
<dbReference type="GO" id="GO:0043161">
    <property type="term" value="P:proteasome-mediated ubiquitin-dependent protein catabolic process"/>
    <property type="evidence" value="ECO:0000318"/>
    <property type="project" value="GO_Central"/>
</dbReference>
<dbReference type="GO" id="GO:0051260">
    <property type="term" value="P:protein homooligomerization"/>
    <property type="evidence" value="ECO:0007669"/>
    <property type="project" value="InterPro"/>
</dbReference>
<dbReference type="CDD" id="cd18390">
    <property type="entry name" value="BTB_POZ_KCTD5"/>
    <property type="match status" value="1"/>
</dbReference>
<dbReference type="FunFam" id="3.30.70.2000:FF:000001">
    <property type="entry name" value="Potassium channel tetramerization domain-containing 17"/>
    <property type="match status" value="1"/>
</dbReference>
<dbReference type="FunFam" id="3.30.710.10:FF:000005">
    <property type="entry name" value="Potassium channel tetramerization domain-containing 17"/>
    <property type="match status" value="1"/>
</dbReference>
<dbReference type="Gene3D" id="3.30.70.2000">
    <property type="match status" value="1"/>
</dbReference>
<dbReference type="Gene3D" id="6.10.140.750">
    <property type="match status" value="1"/>
</dbReference>
<dbReference type="Gene3D" id="3.30.710.10">
    <property type="entry name" value="Potassium Channel Kv1.1, Chain A"/>
    <property type="match status" value="1"/>
</dbReference>
<dbReference type="InterPro" id="IPR000210">
    <property type="entry name" value="BTB/POZ_dom"/>
</dbReference>
<dbReference type="InterPro" id="IPR011333">
    <property type="entry name" value="SKP1/BTB/POZ_sf"/>
</dbReference>
<dbReference type="InterPro" id="IPR003131">
    <property type="entry name" value="T1-type_BTB"/>
</dbReference>
<dbReference type="PANTHER" id="PTHR14958:SF12">
    <property type="entry name" value="BTB_POZ DOMAIN-CONTAINING PROTEIN KCTD5"/>
    <property type="match status" value="1"/>
</dbReference>
<dbReference type="PANTHER" id="PTHR14958">
    <property type="entry name" value="POTASSIUM CHANNEL TETRAMERISATION DOMAIN CONTAINING PROTEIN"/>
    <property type="match status" value="1"/>
</dbReference>
<dbReference type="Pfam" id="PF02214">
    <property type="entry name" value="BTB_2"/>
    <property type="match status" value="1"/>
</dbReference>
<dbReference type="SMART" id="SM00225">
    <property type="entry name" value="BTB"/>
    <property type="match status" value="1"/>
</dbReference>
<dbReference type="SUPFAM" id="SSF54695">
    <property type="entry name" value="POZ domain"/>
    <property type="match status" value="1"/>
</dbReference>
<reference key="1">
    <citation type="submission" date="2005-07" db="EMBL/GenBank/DDBJ databases">
        <authorList>
            <person name="Mural R.J."/>
            <person name="Adams M.D."/>
            <person name="Myers E.W."/>
            <person name="Smith H.O."/>
            <person name="Venter J.C."/>
        </authorList>
    </citation>
    <scope>NUCLEOTIDE SEQUENCE [LARGE SCALE GENOMIC DNA]</scope>
    <source>
        <strain>Brown Norway</strain>
    </source>
</reference>
<reference key="2">
    <citation type="journal article" date="2004" name="Genome Res.">
        <title>The status, quality, and expansion of the NIH full-length cDNA project: the Mammalian Gene Collection (MGC).</title>
        <authorList>
            <consortium name="The MGC Project Team"/>
        </authorList>
    </citation>
    <scope>NUCLEOTIDE SEQUENCE [LARGE SCALE MRNA]</scope>
    <source>
        <tissue>Brain</tissue>
    </source>
</reference>
<sequence>MAENHCELLPPAPSGLGAGLGGGLCRRCSAGIGALAQRPSGVSKWVRLNVGGTYFLTTRQTLCRDPKSFLYRLCQADPDLDSDKDETGAYLIDRDPTYFGPVLNYLRHGKLVINRDLAEEGVLEEAEFYNITSLIKLVKDKIRERDSKTSQMPVKHVYRVLQCQEEELTQMVSTMSDGWKFEQLVSIGSSYNYGNEDQAEFLCVVSKELHNTPYGTTSEPSEKAKILQERGSRM</sequence>
<protein>
    <recommendedName>
        <fullName>BTB/POZ domain-containing protein KCTD5</fullName>
    </recommendedName>
</protein>
<proteinExistence type="evidence at transcript level"/>
<gene>
    <name type="primary">Kctd5</name>
</gene>
<organism>
    <name type="scientific">Rattus norvegicus</name>
    <name type="common">Rat</name>
    <dbReference type="NCBI Taxonomy" id="10116"/>
    <lineage>
        <taxon>Eukaryota</taxon>
        <taxon>Metazoa</taxon>
        <taxon>Chordata</taxon>
        <taxon>Craniata</taxon>
        <taxon>Vertebrata</taxon>
        <taxon>Euteleostomi</taxon>
        <taxon>Mammalia</taxon>
        <taxon>Eutheria</taxon>
        <taxon>Euarchontoglires</taxon>
        <taxon>Glires</taxon>
        <taxon>Rodentia</taxon>
        <taxon>Myomorpha</taxon>
        <taxon>Muroidea</taxon>
        <taxon>Muridae</taxon>
        <taxon>Murinae</taxon>
        <taxon>Rattus</taxon>
    </lineage>
</organism>
<comment type="function">
    <text evidence="2">Its interaction with CUL3 suggests that it may act as a substrate adapter in some E3 ligase complex (By similarity). Does not affect the function of Kv channel Kv2.1/KCNB1, Kv1.2/KCNA2, Kv4.2/KCND2 and Kv3.4/KCNC4 (By similarity).</text>
</comment>
<comment type="subunit">
    <text evidence="1 2">Homopentamer (By similarity). Interacts (via C-terminus) with GRASP55/GORASP2 (By similarity). Interacts with CUL3 and with ubiquitinated proteins (By similarity). Interacts with CRY1 (By similarity).</text>
</comment>
<comment type="subcellular location">
    <subcellularLocation>
        <location evidence="2">Cytoplasm</location>
        <location evidence="2">Cytosol</location>
    </subcellularLocation>
    <subcellularLocation>
        <location evidence="2">Cytoplasm</location>
    </subcellularLocation>
    <subcellularLocation>
        <location evidence="2">Nucleus</location>
    </subcellularLocation>
    <text evidence="2">Predominantly cytoplasmic, translocated to the nucleus upon interaction with Rep proteins.</text>
</comment>
<comment type="domain">
    <text evidence="2">The BTB (POZ) domain is atypical and mediates the formation of a homopentamer instead of a homotetramer (By similarity). Homopentamerization is due to the presence of 4 residues in the BTB (POZ) domain: Leu-56, Gly-100, Val-112 and Ala-118 (By similarity).</text>
</comment>
<name>KCTD5_RAT</name>
<feature type="initiator methionine" description="Removed" evidence="2">
    <location>
        <position position="1"/>
    </location>
</feature>
<feature type="chain" id="PRO_0000390463" description="BTB/POZ domain-containing protein KCTD5">
    <location>
        <begin position="2"/>
        <end position="234"/>
    </location>
</feature>
<feature type="domain" description="BTB">
    <location>
        <begin position="44"/>
        <end position="146"/>
    </location>
</feature>
<feature type="region of interest" description="Disordered" evidence="3">
    <location>
        <begin position="213"/>
        <end position="234"/>
    </location>
</feature>
<feature type="compositionally biased region" description="Basic and acidic residues" evidence="3">
    <location>
        <begin position="220"/>
        <end position="234"/>
    </location>
</feature>
<feature type="modified residue" description="N-acetylalanine" evidence="2">
    <location>
        <position position="2"/>
    </location>
</feature>
<keyword id="KW-0007">Acetylation</keyword>
<keyword id="KW-0963">Cytoplasm</keyword>
<keyword id="KW-0539">Nucleus</keyword>
<keyword id="KW-1185">Reference proteome</keyword>